<accession>B0Z5G2</accession>
<sequence>MKIRASVRKICTKCRLIRRRGRIIVICSNPRHKQRQG</sequence>
<dbReference type="EMBL" id="EU262891">
    <property type="protein sequence ID" value="ABX10155.1"/>
    <property type="molecule type" value="Genomic_DNA"/>
</dbReference>
<dbReference type="RefSeq" id="YP_001687485.1">
    <property type="nucleotide sequence ID" value="NC_010362.1"/>
</dbReference>
<dbReference type="SMR" id="B0Z5G2"/>
<dbReference type="GeneID" id="5955398"/>
<dbReference type="GO" id="GO:0009507">
    <property type="term" value="C:chloroplast"/>
    <property type="evidence" value="ECO:0007669"/>
    <property type="project" value="UniProtKB-SubCell"/>
</dbReference>
<dbReference type="GO" id="GO:1990904">
    <property type="term" value="C:ribonucleoprotein complex"/>
    <property type="evidence" value="ECO:0007669"/>
    <property type="project" value="UniProtKB-KW"/>
</dbReference>
<dbReference type="GO" id="GO:0005840">
    <property type="term" value="C:ribosome"/>
    <property type="evidence" value="ECO:0007669"/>
    <property type="project" value="UniProtKB-KW"/>
</dbReference>
<dbReference type="GO" id="GO:0003735">
    <property type="term" value="F:structural constituent of ribosome"/>
    <property type="evidence" value="ECO:0007669"/>
    <property type="project" value="InterPro"/>
</dbReference>
<dbReference type="GO" id="GO:0006412">
    <property type="term" value="P:translation"/>
    <property type="evidence" value="ECO:0007669"/>
    <property type="project" value="UniProtKB-UniRule"/>
</dbReference>
<dbReference type="HAMAP" id="MF_00251">
    <property type="entry name" value="Ribosomal_bL36"/>
    <property type="match status" value="1"/>
</dbReference>
<dbReference type="InterPro" id="IPR000473">
    <property type="entry name" value="Ribosomal_bL36"/>
</dbReference>
<dbReference type="InterPro" id="IPR035977">
    <property type="entry name" value="Ribosomal_bL36_sp"/>
</dbReference>
<dbReference type="NCBIfam" id="TIGR01022">
    <property type="entry name" value="rpmJ_bact"/>
    <property type="match status" value="1"/>
</dbReference>
<dbReference type="PANTHER" id="PTHR42888">
    <property type="entry name" value="50S RIBOSOMAL PROTEIN L36, CHLOROPLASTIC"/>
    <property type="match status" value="1"/>
</dbReference>
<dbReference type="PANTHER" id="PTHR42888:SF1">
    <property type="entry name" value="LARGE RIBOSOMAL SUBUNIT PROTEIN BL36C"/>
    <property type="match status" value="1"/>
</dbReference>
<dbReference type="Pfam" id="PF00444">
    <property type="entry name" value="Ribosomal_L36"/>
    <property type="match status" value="1"/>
</dbReference>
<dbReference type="SUPFAM" id="SSF57840">
    <property type="entry name" value="Ribosomal protein L36"/>
    <property type="match status" value="1"/>
</dbReference>
<dbReference type="PROSITE" id="PS00828">
    <property type="entry name" value="RIBOSOMAL_L36"/>
    <property type="match status" value="1"/>
</dbReference>
<reference key="1">
    <citation type="journal article" date="2008" name="Nucleic Acids Res.">
        <title>The complete nucleotide sequences of the five genetically distinct plastid genomes of Oenothera, subsection Oenothera: I. Sequence evaluation and plastome evolution.</title>
        <authorList>
            <person name="Greiner S."/>
            <person name="Wang X."/>
            <person name="Rauwolf U."/>
            <person name="Silber M.V."/>
            <person name="Mayer K."/>
            <person name="Meurer J."/>
            <person name="Haberer G."/>
            <person name="Herrmann R.G."/>
        </authorList>
    </citation>
    <scope>NUCLEOTIDE SEQUENCE [LARGE SCALE GENOMIC DNA]</scope>
    <source>
        <strain>cv. Atrovirens</strain>
    </source>
</reference>
<geneLocation type="chloroplast"/>
<evidence type="ECO:0000255" key="1">
    <source>
        <dbReference type="HAMAP-Rule" id="MF_00251"/>
    </source>
</evidence>
<evidence type="ECO:0000305" key="2"/>
<gene>
    <name evidence="1" type="primary">rpl36</name>
</gene>
<feature type="chain" id="PRO_0000344776" description="Large ribosomal subunit protein bL36c">
    <location>
        <begin position="1"/>
        <end position="37"/>
    </location>
</feature>
<comment type="subcellular location">
    <subcellularLocation>
        <location>Plastid</location>
        <location>Chloroplast</location>
    </subcellularLocation>
</comment>
<comment type="similarity">
    <text evidence="1">Belongs to the bacterial ribosomal protein bL36 family.</text>
</comment>
<organism>
    <name type="scientific">Oenothera parviflora</name>
    <name type="common">Small-flowered evening primrose</name>
    <name type="synonym">Oenothera cruciata</name>
    <dbReference type="NCBI Taxonomy" id="482429"/>
    <lineage>
        <taxon>Eukaryota</taxon>
        <taxon>Viridiplantae</taxon>
        <taxon>Streptophyta</taxon>
        <taxon>Embryophyta</taxon>
        <taxon>Tracheophyta</taxon>
        <taxon>Spermatophyta</taxon>
        <taxon>Magnoliopsida</taxon>
        <taxon>eudicotyledons</taxon>
        <taxon>Gunneridae</taxon>
        <taxon>Pentapetalae</taxon>
        <taxon>rosids</taxon>
        <taxon>malvids</taxon>
        <taxon>Myrtales</taxon>
        <taxon>Onagraceae</taxon>
        <taxon>Onagroideae</taxon>
        <taxon>Onagreae</taxon>
        <taxon>Oenothera</taxon>
    </lineage>
</organism>
<keyword id="KW-0150">Chloroplast</keyword>
<keyword id="KW-0934">Plastid</keyword>
<keyword id="KW-0687">Ribonucleoprotein</keyword>
<keyword id="KW-0689">Ribosomal protein</keyword>
<name>RK36_OENPA</name>
<proteinExistence type="inferred from homology"/>
<protein>
    <recommendedName>
        <fullName evidence="1">Large ribosomal subunit protein bL36c</fullName>
    </recommendedName>
    <alternativeName>
        <fullName evidence="2">50S ribosomal protein L36, chloroplastic</fullName>
    </alternativeName>
</protein>